<feature type="signal peptide" evidence="3">
    <location>
        <begin position="1"/>
        <end position="19"/>
    </location>
</feature>
<feature type="propeptide" id="PRO_0000028279" description="Activation peptide">
    <location>
        <begin position="20"/>
        <end position="34"/>
    </location>
</feature>
<feature type="chain" id="PRO_0000028280" description="Trypsin theta">
    <location>
        <begin position="35"/>
        <end position="262"/>
    </location>
</feature>
<feature type="domain" description="Peptidase S1" evidence="2">
    <location>
        <begin position="35"/>
        <end position="260"/>
    </location>
</feature>
<feature type="active site" description="Charge relay system" evidence="1">
    <location>
        <position position="76"/>
    </location>
</feature>
<feature type="active site" description="Charge relay system" evidence="1">
    <location>
        <position position="121"/>
    </location>
</feature>
<feature type="active site" description="Charge relay system" evidence="1">
    <location>
        <position position="216"/>
    </location>
</feature>
<feature type="site" description="Required for specificity" evidence="1">
    <location>
        <position position="210"/>
    </location>
</feature>
<feature type="disulfide bond" evidence="2">
    <location>
        <begin position="61"/>
        <end position="77"/>
    </location>
</feature>
<feature type="disulfide bond" evidence="2">
    <location>
        <begin position="186"/>
        <end position="203"/>
    </location>
</feature>
<feature type="disulfide bond" evidence="2">
    <location>
        <begin position="212"/>
        <end position="236"/>
    </location>
</feature>
<feature type="sequence conflict" description="In Ref. 1; AAA17454." evidence="3" ref="1">
    <original>AH</original>
    <variation>GD</variation>
    <location>
        <begin position="45"/>
        <end position="46"/>
    </location>
</feature>
<feature type="sequence conflict" description="In Ref. 4; AAL48054." evidence="3" ref="4">
    <original>T</original>
    <variation>A</variation>
    <location>
        <position position="73"/>
    </location>
</feature>
<sequence length="262" mass="28378">MHRLVVLLVCLAVGSACAGTVGVSNGDPFEREGRIVGGEDTTIGAHPYQVSLQTKSGSHFCGGSLINEDTVVTAAHCLVGRKVSKVFVRLGSTLYNEGGIVVAVRELAYNEDYNSKTMEYDVGILKLDEKVKETENIRYIELATETPPTGTTAVVTGWGSKCYFWCMTLPKTLQEVYVNIVDWKTCASDEYKYGEIIYDSMVCAYEKKKDACQGDSGGPLAVGNTLVGIVSWGYACASNLLPGVYSDVPALRKWILNASETL</sequence>
<protein>
    <recommendedName>
        <fullName>Trypsin theta</fullName>
        <ecNumber>3.4.21.4</ecNumber>
    </recommendedName>
</protein>
<proteinExistence type="evidence at transcript level"/>
<dbReference type="EC" id="3.4.21.4"/>
<dbReference type="EMBL" id="U04853">
    <property type="protein sequence ID" value="AAA17454.1"/>
    <property type="molecule type" value="Genomic_DNA"/>
</dbReference>
<dbReference type="EMBL" id="AE013599">
    <property type="protein sequence ID" value="AAF58661.1"/>
    <property type="molecule type" value="Genomic_DNA"/>
</dbReference>
<dbReference type="EMBL" id="AY070583">
    <property type="protein sequence ID" value="AAL48054.1"/>
    <property type="molecule type" value="mRNA"/>
</dbReference>
<dbReference type="RefSeq" id="NP_523693.1">
    <property type="nucleotide sequence ID" value="NM_078969.5"/>
</dbReference>
<dbReference type="SMR" id="P42278"/>
<dbReference type="FunCoup" id="P42278">
    <property type="interactions" value="66"/>
</dbReference>
<dbReference type="STRING" id="7227.FBpp0087258"/>
<dbReference type="MEROPS" id="S01.114"/>
<dbReference type="PaxDb" id="7227-FBpp0087258"/>
<dbReference type="DNASU" id="36218"/>
<dbReference type="EnsemblMetazoa" id="FBtr0088162">
    <property type="protein sequence ID" value="FBpp0087258"/>
    <property type="gene ID" value="FBgn0011555"/>
</dbReference>
<dbReference type="GeneID" id="36218"/>
<dbReference type="KEGG" id="dme:Dmel_CG12385"/>
<dbReference type="UCSC" id="CG12385-RA">
    <property type="organism name" value="d. melanogaster"/>
</dbReference>
<dbReference type="AGR" id="FB:FBgn0011555"/>
<dbReference type="CTD" id="36218"/>
<dbReference type="FlyBase" id="FBgn0011555">
    <property type="gene designation" value="thetaTry"/>
</dbReference>
<dbReference type="VEuPathDB" id="VectorBase:FBgn0011555"/>
<dbReference type="eggNOG" id="KOG3627">
    <property type="taxonomic scope" value="Eukaryota"/>
</dbReference>
<dbReference type="GeneTree" id="ENSGT00940000169778"/>
<dbReference type="HOGENOM" id="CLU_006842_7_1_1"/>
<dbReference type="InParanoid" id="P42278"/>
<dbReference type="OMA" id="FWCMSLP"/>
<dbReference type="OrthoDB" id="10059102at2759"/>
<dbReference type="PhylomeDB" id="P42278"/>
<dbReference type="BioGRID-ORCS" id="36218">
    <property type="hits" value="0 hits in 1 CRISPR screen"/>
</dbReference>
<dbReference type="GenomeRNAi" id="36218"/>
<dbReference type="PRO" id="PR:P42278"/>
<dbReference type="Proteomes" id="UP000000803">
    <property type="component" value="Chromosome 2R"/>
</dbReference>
<dbReference type="Bgee" id="FBgn0011555">
    <property type="expression patterns" value="Expressed in copper cell (Drosophila) in digestive tract and 26 other cell types or tissues"/>
</dbReference>
<dbReference type="ExpressionAtlas" id="P42278">
    <property type="expression patterns" value="baseline and differential"/>
</dbReference>
<dbReference type="GO" id="GO:0005576">
    <property type="term" value="C:extracellular region"/>
    <property type="evidence" value="ECO:0007669"/>
    <property type="project" value="UniProtKB-SubCell"/>
</dbReference>
<dbReference type="GO" id="GO:0017171">
    <property type="term" value="F:serine hydrolase activity"/>
    <property type="evidence" value="ECO:0007005"/>
    <property type="project" value="FlyBase"/>
</dbReference>
<dbReference type="GO" id="GO:0004252">
    <property type="term" value="F:serine-type endopeptidase activity"/>
    <property type="evidence" value="ECO:0000255"/>
    <property type="project" value="FlyBase"/>
</dbReference>
<dbReference type="GO" id="GO:0006508">
    <property type="term" value="P:proteolysis"/>
    <property type="evidence" value="ECO:0000255"/>
    <property type="project" value="FlyBase"/>
</dbReference>
<dbReference type="CDD" id="cd00190">
    <property type="entry name" value="Tryp_SPc"/>
    <property type="match status" value="1"/>
</dbReference>
<dbReference type="FunFam" id="2.40.10.10:FF:000077">
    <property type="entry name" value="Predicted protein"/>
    <property type="match status" value="1"/>
</dbReference>
<dbReference type="Gene3D" id="2.40.10.10">
    <property type="entry name" value="Trypsin-like serine proteases"/>
    <property type="match status" value="1"/>
</dbReference>
<dbReference type="InterPro" id="IPR050430">
    <property type="entry name" value="Peptidase_S1"/>
</dbReference>
<dbReference type="InterPro" id="IPR009003">
    <property type="entry name" value="Peptidase_S1_PA"/>
</dbReference>
<dbReference type="InterPro" id="IPR043504">
    <property type="entry name" value="Peptidase_S1_PA_chymotrypsin"/>
</dbReference>
<dbReference type="InterPro" id="IPR001314">
    <property type="entry name" value="Peptidase_S1A"/>
</dbReference>
<dbReference type="InterPro" id="IPR001254">
    <property type="entry name" value="Trypsin_dom"/>
</dbReference>
<dbReference type="InterPro" id="IPR018114">
    <property type="entry name" value="TRYPSIN_HIS"/>
</dbReference>
<dbReference type="InterPro" id="IPR033116">
    <property type="entry name" value="TRYPSIN_SER"/>
</dbReference>
<dbReference type="PANTHER" id="PTHR24276:SF94">
    <property type="entry name" value="AT20289P-RELATED"/>
    <property type="match status" value="1"/>
</dbReference>
<dbReference type="PANTHER" id="PTHR24276">
    <property type="entry name" value="POLYSERASE-RELATED"/>
    <property type="match status" value="1"/>
</dbReference>
<dbReference type="Pfam" id="PF00089">
    <property type="entry name" value="Trypsin"/>
    <property type="match status" value="1"/>
</dbReference>
<dbReference type="PRINTS" id="PR00722">
    <property type="entry name" value="CHYMOTRYPSIN"/>
</dbReference>
<dbReference type="SMART" id="SM00020">
    <property type="entry name" value="Tryp_SPc"/>
    <property type="match status" value="1"/>
</dbReference>
<dbReference type="SUPFAM" id="SSF50494">
    <property type="entry name" value="Trypsin-like serine proteases"/>
    <property type="match status" value="1"/>
</dbReference>
<dbReference type="PROSITE" id="PS50240">
    <property type="entry name" value="TRYPSIN_DOM"/>
    <property type="match status" value="1"/>
</dbReference>
<dbReference type="PROSITE" id="PS00134">
    <property type="entry name" value="TRYPSIN_HIS"/>
    <property type="match status" value="1"/>
</dbReference>
<dbReference type="PROSITE" id="PS00135">
    <property type="entry name" value="TRYPSIN_SER"/>
    <property type="match status" value="1"/>
</dbReference>
<evidence type="ECO:0000250" key="1"/>
<evidence type="ECO:0000255" key="2">
    <source>
        <dbReference type="PROSITE-ProRule" id="PRU00274"/>
    </source>
</evidence>
<evidence type="ECO:0000305" key="3"/>
<keyword id="KW-1015">Disulfide bond</keyword>
<keyword id="KW-0378">Hydrolase</keyword>
<keyword id="KW-0645">Protease</keyword>
<keyword id="KW-1185">Reference proteome</keyword>
<keyword id="KW-0964">Secreted</keyword>
<keyword id="KW-0720">Serine protease</keyword>
<keyword id="KW-0732">Signal</keyword>
<keyword id="KW-0865">Zymogen</keyword>
<reference key="1">
    <citation type="journal article" date="1999" name="Mol. Biol. Evol.">
        <title>Concerted evolution within a trypsin gene cluster in Drosophila.</title>
        <authorList>
            <person name="Wang S."/>
            <person name="Magoulas C."/>
            <person name="Hickey D.A."/>
        </authorList>
    </citation>
    <scope>NUCLEOTIDE SEQUENCE [GENOMIC DNA]</scope>
    <source>
        <strain>Oregon-R</strain>
    </source>
</reference>
<reference key="2">
    <citation type="journal article" date="2000" name="Science">
        <title>The genome sequence of Drosophila melanogaster.</title>
        <authorList>
            <person name="Adams M.D."/>
            <person name="Celniker S.E."/>
            <person name="Holt R.A."/>
            <person name="Evans C.A."/>
            <person name="Gocayne J.D."/>
            <person name="Amanatides P.G."/>
            <person name="Scherer S.E."/>
            <person name="Li P.W."/>
            <person name="Hoskins R.A."/>
            <person name="Galle R.F."/>
            <person name="George R.A."/>
            <person name="Lewis S.E."/>
            <person name="Richards S."/>
            <person name="Ashburner M."/>
            <person name="Henderson S.N."/>
            <person name="Sutton G.G."/>
            <person name="Wortman J.R."/>
            <person name="Yandell M.D."/>
            <person name="Zhang Q."/>
            <person name="Chen L.X."/>
            <person name="Brandon R.C."/>
            <person name="Rogers Y.-H.C."/>
            <person name="Blazej R.G."/>
            <person name="Champe M."/>
            <person name="Pfeiffer B.D."/>
            <person name="Wan K.H."/>
            <person name="Doyle C."/>
            <person name="Baxter E.G."/>
            <person name="Helt G."/>
            <person name="Nelson C.R."/>
            <person name="Miklos G.L.G."/>
            <person name="Abril J.F."/>
            <person name="Agbayani A."/>
            <person name="An H.-J."/>
            <person name="Andrews-Pfannkoch C."/>
            <person name="Baldwin D."/>
            <person name="Ballew R.M."/>
            <person name="Basu A."/>
            <person name="Baxendale J."/>
            <person name="Bayraktaroglu L."/>
            <person name="Beasley E.M."/>
            <person name="Beeson K.Y."/>
            <person name="Benos P.V."/>
            <person name="Berman B.P."/>
            <person name="Bhandari D."/>
            <person name="Bolshakov S."/>
            <person name="Borkova D."/>
            <person name="Botchan M.R."/>
            <person name="Bouck J."/>
            <person name="Brokstein P."/>
            <person name="Brottier P."/>
            <person name="Burtis K.C."/>
            <person name="Busam D.A."/>
            <person name="Butler H."/>
            <person name="Cadieu E."/>
            <person name="Center A."/>
            <person name="Chandra I."/>
            <person name="Cherry J.M."/>
            <person name="Cawley S."/>
            <person name="Dahlke C."/>
            <person name="Davenport L.B."/>
            <person name="Davies P."/>
            <person name="de Pablos B."/>
            <person name="Delcher A."/>
            <person name="Deng Z."/>
            <person name="Mays A.D."/>
            <person name="Dew I."/>
            <person name="Dietz S.M."/>
            <person name="Dodson K."/>
            <person name="Doup L.E."/>
            <person name="Downes M."/>
            <person name="Dugan-Rocha S."/>
            <person name="Dunkov B.C."/>
            <person name="Dunn P."/>
            <person name="Durbin K.J."/>
            <person name="Evangelista C.C."/>
            <person name="Ferraz C."/>
            <person name="Ferriera S."/>
            <person name="Fleischmann W."/>
            <person name="Fosler C."/>
            <person name="Gabrielian A.E."/>
            <person name="Garg N.S."/>
            <person name="Gelbart W.M."/>
            <person name="Glasser K."/>
            <person name="Glodek A."/>
            <person name="Gong F."/>
            <person name="Gorrell J.H."/>
            <person name="Gu Z."/>
            <person name="Guan P."/>
            <person name="Harris M."/>
            <person name="Harris N.L."/>
            <person name="Harvey D.A."/>
            <person name="Heiman T.J."/>
            <person name="Hernandez J.R."/>
            <person name="Houck J."/>
            <person name="Hostin D."/>
            <person name="Houston K.A."/>
            <person name="Howland T.J."/>
            <person name="Wei M.-H."/>
            <person name="Ibegwam C."/>
            <person name="Jalali M."/>
            <person name="Kalush F."/>
            <person name="Karpen G.H."/>
            <person name="Ke Z."/>
            <person name="Kennison J.A."/>
            <person name="Ketchum K.A."/>
            <person name="Kimmel B.E."/>
            <person name="Kodira C.D."/>
            <person name="Kraft C.L."/>
            <person name="Kravitz S."/>
            <person name="Kulp D."/>
            <person name="Lai Z."/>
            <person name="Lasko P."/>
            <person name="Lei Y."/>
            <person name="Levitsky A.A."/>
            <person name="Li J.H."/>
            <person name="Li Z."/>
            <person name="Liang Y."/>
            <person name="Lin X."/>
            <person name="Liu X."/>
            <person name="Mattei B."/>
            <person name="McIntosh T.C."/>
            <person name="McLeod M.P."/>
            <person name="McPherson D."/>
            <person name="Merkulov G."/>
            <person name="Milshina N.V."/>
            <person name="Mobarry C."/>
            <person name="Morris J."/>
            <person name="Moshrefi A."/>
            <person name="Mount S.M."/>
            <person name="Moy M."/>
            <person name="Murphy B."/>
            <person name="Murphy L."/>
            <person name="Muzny D.M."/>
            <person name="Nelson D.L."/>
            <person name="Nelson D.R."/>
            <person name="Nelson K.A."/>
            <person name="Nixon K."/>
            <person name="Nusskern D.R."/>
            <person name="Pacleb J.M."/>
            <person name="Palazzolo M."/>
            <person name="Pittman G.S."/>
            <person name="Pan S."/>
            <person name="Pollard J."/>
            <person name="Puri V."/>
            <person name="Reese M.G."/>
            <person name="Reinert K."/>
            <person name="Remington K."/>
            <person name="Saunders R.D.C."/>
            <person name="Scheeler F."/>
            <person name="Shen H."/>
            <person name="Shue B.C."/>
            <person name="Siden-Kiamos I."/>
            <person name="Simpson M."/>
            <person name="Skupski M.P."/>
            <person name="Smith T.J."/>
            <person name="Spier E."/>
            <person name="Spradling A.C."/>
            <person name="Stapleton M."/>
            <person name="Strong R."/>
            <person name="Sun E."/>
            <person name="Svirskas R."/>
            <person name="Tector C."/>
            <person name="Turner R."/>
            <person name="Venter E."/>
            <person name="Wang A.H."/>
            <person name="Wang X."/>
            <person name="Wang Z.-Y."/>
            <person name="Wassarman D.A."/>
            <person name="Weinstock G.M."/>
            <person name="Weissenbach J."/>
            <person name="Williams S.M."/>
            <person name="Woodage T."/>
            <person name="Worley K.C."/>
            <person name="Wu D."/>
            <person name="Yang S."/>
            <person name="Yao Q.A."/>
            <person name="Ye J."/>
            <person name="Yeh R.-F."/>
            <person name="Zaveri J.S."/>
            <person name="Zhan M."/>
            <person name="Zhang G."/>
            <person name="Zhao Q."/>
            <person name="Zheng L."/>
            <person name="Zheng X.H."/>
            <person name="Zhong F.N."/>
            <person name="Zhong W."/>
            <person name="Zhou X."/>
            <person name="Zhu S.C."/>
            <person name="Zhu X."/>
            <person name="Smith H.O."/>
            <person name="Gibbs R.A."/>
            <person name="Myers E.W."/>
            <person name="Rubin G.M."/>
            <person name="Venter J.C."/>
        </authorList>
    </citation>
    <scope>NUCLEOTIDE SEQUENCE [LARGE SCALE GENOMIC DNA]</scope>
    <source>
        <strain>Berkeley</strain>
    </source>
</reference>
<reference key="3">
    <citation type="journal article" date="2002" name="Genome Biol.">
        <title>Annotation of the Drosophila melanogaster euchromatic genome: a systematic review.</title>
        <authorList>
            <person name="Misra S."/>
            <person name="Crosby M.A."/>
            <person name="Mungall C.J."/>
            <person name="Matthews B.B."/>
            <person name="Campbell K.S."/>
            <person name="Hradecky P."/>
            <person name="Huang Y."/>
            <person name="Kaminker J.S."/>
            <person name="Millburn G.H."/>
            <person name="Prochnik S.E."/>
            <person name="Smith C.D."/>
            <person name="Tupy J.L."/>
            <person name="Whitfield E.J."/>
            <person name="Bayraktaroglu L."/>
            <person name="Berman B.P."/>
            <person name="Bettencourt B.R."/>
            <person name="Celniker S.E."/>
            <person name="de Grey A.D.N.J."/>
            <person name="Drysdale R.A."/>
            <person name="Harris N.L."/>
            <person name="Richter J."/>
            <person name="Russo S."/>
            <person name="Schroeder A.J."/>
            <person name="Shu S.Q."/>
            <person name="Stapleton M."/>
            <person name="Yamada C."/>
            <person name="Ashburner M."/>
            <person name="Gelbart W.M."/>
            <person name="Rubin G.M."/>
            <person name="Lewis S.E."/>
        </authorList>
    </citation>
    <scope>GENOME REANNOTATION</scope>
    <source>
        <strain>Berkeley</strain>
    </source>
</reference>
<reference key="4">
    <citation type="journal article" date="2002" name="Genome Biol.">
        <title>A Drosophila full-length cDNA resource.</title>
        <authorList>
            <person name="Stapleton M."/>
            <person name="Carlson J.W."/>
            <person name="Brokstein P."/>
            <person name="Yu C."/>
            <person name="Champe M."/>
            <person name="George R.A."/>
            <person name="Guarin H."/>
            <person name="Kronmiller B."/>
            <person name="Pacleb J.M."/>
            <person name="Park S."/>
            <person name="Wan K.H."/>
            <person name="Rubin G.M."/>
            <person name="Celniker S.E."/>
        </authorList>
    </citation>
    <scope>NUCLEOTIDE SEQUENCE [LARGE SCALE MRNA]</scope>
    <source>
        <strain>Berkeley</strain>
        <tissue>Embryo</tissue>
    </source>
</reference>
<comment type="catalytic activity">
    <reaction>
        <text>Preferential cleavage: Arg-|-Xaa, Lys-|-Xaa.</text>
        <dbReference type="EC" id="3.4.21.4"/>
    </reaction>
</comment>
<comment type="subcellular location">
    <subcellularLocation>
        <location>Secreted</location>
        <location>Extracellular space</location>
    </subcellularLocation>
</comment>
<comment type="similarity">
    <text evidence="2">Belongs to the peptidase S1 family.</text>
</comment>
<name>TRYT_DROME</name>
<gene>
    <name type="primary">thetaTry</name>
    <name type="ORF">CG12385</name>
</gene>
<accession>P42278</accession>
<accession>Q8SZQ7</accession>
<accession>Q9V5Y0</accession>
<organism>
    <name type="scientific">Drosophila melanogaster</name>
    <name type="common">Fruit fly</name>
    <dbReference type="NCBI Taxonomy" id="7227"/>
    <lineage>
        <taxon>Eukaryota</taxon>
        <taxon>Metazoa</taxon>
        <taxon>Ecdysozoa</taxon>
        <taxon>Arthropoda</taxon>
        <taxon>Hexapoda</taxon>
        <taxon>Insecta</taxon>
        <taxon>Pterygota</taxon>
        <taxon>Neoptera</taxon>
        <taxon>Endopterygota</taxon>
        <taxon>Diptera</taxon>
        <taxon>Brachycera</taxon>
        <taxon>Muscomorpha</taxon>
        <taxon>Ephydroidea</taxon>
        <taxon>Drosophilidae</taxon>
        <taxon>Drosophila</taxon>
        <taxon>Sophophora</taxon>
    </lineage>
</organism>